<dbReference type="EMBL" id="AL391146">
    <property type="protein sequence ID" value="CAC01811.1"/>
    <property type="molecule type" value="Genomic_DNA"/>
</dbReference>
<dbReference type="EMBL" id="CP002688">
    <property type="protein sequence ID" value="AED92089.1"/>
    <property type="molecule type" value="Genomic_DNA"/>
</dbReference>
<dbReference type="EMBL" id="AF372894">
    <property type="protein sequence ID" value="AAK49610.1"/>
    <property type="molecule type" value="mRNA"/>
</dbReference>
<dbReference type="EMBL" id="AY045696">
    <property type="protein sequence ID" value="AAK74054.1"/>
    <property type="molecule type" value="mRNA"/>
</dbReference>
<dbReference type="EMBL" id="AY055791">
    <property type="protein sequence ID" value="AAL06958.1"/>
    <property type="molecule type" value="mRNA"/>
</dbReference>
<dbReference type="EMBL" id="AY057724">
    <property type="protein sequence ID" value="AAL15354.1"/>
    <property type="molecule type" value="mRNA"/>
</dbReference>
<dbReference type="EMBL" id="AY087183">
    <property type="protein sequence ID" value="AAM64739.1"/>
    <property type="molecule type" value="mRNA"/>
</dbReference>
<dbReference type="PIR" id="T51437">
    <property type="entry name" value="T51437"/>
</dbReference>
<dbReference type="RefSeq" id="NP_196996.1">
    <molecule id="Q9LFR3-1"/>
    <property type="nucleotide sequence ID" value="NM_121496.4"/>
</dbReference>
<dbReference type="SMR" id="Q9LFR3"/>
<dbReference type="BioGRID" id="16621">
    <property type="interactions" value="2"/>
</dbReference>
<dbReference type="IntAct" id="Q9LFR3">
    <property type="interactions" value="2"/>
</dbReference>
<dbReference type="STRING" id="3702.Q9LFR3"/>
<dbReference type="GlyGen" id="Q9LFR3">
    <property type="glycosylation" value="1 site"/>
</dbReference>
<dbReference type="PaxDb" id="3702-AT5G14920.1"/>
<dbReference type="ProteomicsDB" id="230012">
    <molecule id="Q9LFR3-1"/>
</dbReference>
<dbReference type="EnsemblPlants" id="AT5G14920.1">
    <molecule id="Q9LFR3-1"/>
    <property type="protein sequence ID" value="AT5G14920.1"/>
    <property type="gene ID" value="AT5G14920"/>
</dbReference>
<dbReference type="GeneID" id="831344"/>
<dbReference type="Gramene" id="AT5G14920.1">
    <molecule id="Q9LFR3-1"/>
    <property type="protein sequence ID" value="AT5G14920.1"/>
    <property type="gene ID" value="AT5G14920"/>
</dbReference>
<dbReference type="KEGG" id="ath:AT5G14920"/>
<dbReference type="Araport" id="AT5G14920"/>
<dbReference type="TAIR" id="AT5G14920">
    <property type="gene designation" value="GASA14"/>
</dbReference>
<dbReference type="eggNOG" id="ENOG502RYFP">
    <property type="taxonomic scope" value="Eukaryota"/>
</dbReference>
<dbReference type="HOGENOM" id="CLU_081436_0_0_1"/>
<dbReference type="InParanoid" id="Q9LFR3"/>
<dbReference type="PRO" id="PR:Q9LFR3"/>
<dbReference type="Proteomes" id="UP000006548">
    <property type="component" value="Chromosome 5"/>
</dbReference>
<dbReference type="ExpressionAtlas" id="Q9LFR3">
    <property type="expression patterns" value="baseline and differential"/>
</dbReference>
<dbReference type="GO" id="GO:0005576">
    <property type="term" value="C:extracellular region"/>
    <property type="evidence" value="ECO:0007669"/>
    <property type="project" value="UniProtKB-SubCell"/>
</dbReference>
<dbReference type="GO" id="GO:0005886">
    <property type="term" value="C:plasma membrane"/>
    <property type="evidence" value="ECO:0000314"/>
    <property type="project" value="TAIR"/>
</dbReference>
<dbReference type="GO" id="GO:0009536">
    <property type="term" value="C:plastid"/>
    <property type="evidence" value="ECO:0007005"/>
    <property type="project" value="TAIR"/>
</dbReference>
<dbReference type="GO" id="GO:0009740">
    <property type="term" value="P:gibberellic acid mediated signaling pathway"/>
    <property type="evidence" value="ECO:0007669"/>
    <property type="project" value="UniProtKB-KW"/>
</dbReference>
<dbReference type="GO" id="GO:2000377">
    <property type="term" value="P:regulation of reactive oxygen species metabolic process"/>
    <property type="evidence" value="ECO:0000315"/>
    <property type="project" value="TAIR"/>
</dbReference>
<dbReference type="GO" id="GO:0009737">
    <property type="term" value="P:response to abscisic acid"/>
    <property type="evidence" value="ECO:0000315"/>
    <property type="project" value="TAIR"/>
</dbReference>
<dbReference type="GO" id="GO:0009739">
    <property type="term" value="P:response to gibberellin"/>
    <property type="evidence" value="ECO:0000270"/>
    <property type="project" value="TAIR"/>
</dbReference>
<dbReference type="GO" id="GO:0009651">
    <property type="term" value="P:response to salt stress"/>
    <property type="evidence" value="ECO:0000315"/>
    <property type="project" value="TAIR"/>
</dbReference>
<dbReference type="InterPro" id="IPR003854">
    <property type="entry name" value="GASA"/>
</dbReference>
<dbReference type="PANTHER" id="PTHR23201">
    <property type="entry name" value="EXTENSIN, PROLINE-RICH PROTEIN"/>
    <property type="match status" value="1"/>
</dbReference>
<dbReference type="PANTHER" id="PTHR23201:SF53">
    <property type="entry name" value="GIBBERELLIN-REGULATED PROTEIN 14"/>
    <property type="match status" value="1"/>
</dbReference>
<dbReference type="Pfam" id="PF02704">
    <property type="entry name" value="GASA"/>
    <property type="match status" value="1"/>
</dbReference>
<dbReference type="PRINTS" id="PR01217">
    <property type="entry name" value="PRICHEXTENSN"/>
</dbReference>
<evidence type="ECO:0000250" key="1"/>
<evidence type="ECO:0000255" key="2"/>
<evidence type="ECO:0000256" key="3">
    <source>
        <dbReference type="SAM" id="MobiDB-lite"/>
    </source>
</evidence>
<evidence type="ECO:0000269" key="4">
    <source>
    </source>
</evidence>
<evidence type="ECO:0000305" key="5"/>
<accession>Q9LFR3</accession>
<accession>Q8LBI7</accession>
<comment type="function">
    <text evidence="1">Gibberellin-regulated protein that may function in hormonal controlled steps of development such as seed germination, flowering and seed maturation.</text>
</comment>
<comment type="interaction">
    <interactant intactId="EBI-2293075">
        <id>Q9LFR3</id>
    </interactant>
    <interactant intactId="EBI-4426052">
        <id>Q949M9</id>
        <label>GET3A</label>
    </interactant>
    <organismsDiffer>false</organismsDiffer>
    <experiments>2</experiments>
</comment>
<comment type="subcellular location">
    <subcellularLocation>
        <location evidence="1">Secreted</location>
    </subcellularLocation>
</comment>
<comment type="alternative products">
    <event type="alternative splicing"/>
    <isoform>
        <id>Q9LFR3-1</id>
        <name>1</name>
        <sequence type="displayed"/>
    </isoform>
    <text>A number of isoforms are produced. According to EST sequences.</text>
</comment>
<comment type="tissue specificity">
    <text evidence="4">Expressed in flower abscission zone, style, stamen filaments and lateral roots.</text>
</comment>
<comment type="PTM">
    <text evidence="1">Six disulfide bonds may be present.</text>
</comment>
<comment type="similarity">
    <text evidence="5">Belongs to the GASA family.</text>
</comment>
<proteinExistence type="evidence at protein level"/>
<keyword id="KW-0025">Alternative splicing</keyword>
<keyword id="KW-1015">Disulfide bond</keyword>
<keyword id="KW-0939">Gibberellin signaling pathway</keyword>
<keyword id="KW-1185">Reference proteome</keyword>
<keyword id="KW-0964">Secreted</keyword>
<keyword id="KW-0732">Signal</keyword>
<gene>
    <name type="primary">GASA14</name>
    <name type="ordered locus">At5g14920</name>
    <name type="ORF">F2G14.40</name>
</gene>
<organism>
    <name type="scientific">Arabidopsis thaliana</name>
    <name type="common">Mouse-ear cress</name>
    <dbReference type="NCBI Taxonomy" id="3702"/>
    <lineage>
        <taxon>Eukaryota</taxon>
        <taxon>Viridiplantae</taxon>
        <taxon>Streptophyta</taxon>
        <taxon>Embryophyta</taxon>
        <taxon>Tracheophyta</taxon>
        <taxon>Spermatophyta</taxon>
        <taxon>Magnoliopsida</taxon>
        <taxon>eudicotyledons</taxon>
        <taxon>Gunneridae</taxon>
        <taxon>Pentapetalae</taxon>
        <taxon>rosids</taxon>
        <taxon>malvids</taxon>
        <taxon>Brassicales</taxon>
        <taxon>Brassicaceae</taxon>
        <taxon>Camelineae</taxon>
        <taxon>Arabidopsis</taxon>
    </lineage>
</organism>
<reference key="1">
    <citation type="journal article" date="2000" name="Nature">
        <title>Sequence and analysis of chromosome 5 of the plant Arabidopsis thaliana.</title>
        <authorList>
            <person name="Tabata S."/>
            <person name="Kaneko T."/>
            <person name="Nakamura Y."/>
            <person name="Kotani H."/>
            <person name="Kato T."/>
            <person name="Asamizu E."/>
            <person name="Miyajima N."/>
            <person name="Sasamoto S."/>
            <person name="Kimura T."/>
            <person name="Hosouchi T."/>
            <person name="Kawashima K."/>
            <person name="Kohara M."/>
            <person name="Matsumoto M."/>
            <person name="Matsuno A."/>
            <person name="Muraki A."/>
            <person name="Nakayama S."/>
            <person name="Nakazaki N."/>
            <person name="Naruo K."/>
            <person name="Okumura S."/>
            <person name="Shinpo S."/>
            <person name="Takeuchi C."/>
            <person name="Wada T."/>
            <person name="Watanabe A."/>
            <person name="Yamada M."/>
            <person name="Yasuda M."/>
            <person name="Sato S."/>
            <person name="de la Bastide M."/>
            <person name="Huang E."/>
            <person name="Spiegel L."/>
            <person name="Gnoj L."/>
            <person name="O'Shaughnessy A."/>
            <person name="Preston R."/>
            <person name="Habermann K."/>
            <person name="Murray J."/>
            <person name="Johnson D."/>
            <person name="Rohlfing T."/>
            <person name="Nelson J."/>
            <person name="Stoneking T."/>
            <person name="Pepin K."/>
            <person name="Spieth J."/>
            <person name="Sekhon M."/>
            <person name="Armstrong J."/>
            <person name="Becker M."/>
            <person name="Belter E."/>
            <person name="Cordum H."/>
            <person name="Cordes M."/>
            <person name="Courtney L."/>
            <person name="Courtney W."/>
            <person name="Dante M."/>
            <person name="Du H."/>
            <person name="Edwards J."/>
            <person name="Fryman J."/>
            <person name="Haakensen B."/>
            <person name="Lamar E."/>
            <person name="Latreille P."/>
            <person name="Leonard S."/>
            <person name="Meyer R."/>
            <person name="Mulvaney E."/>
            <person name="Ozersky P."/>
            <person name="Riley A."/>
            <person name="Strowmatt C."/>
            <person name="Wagner-McPherson C."/>
            <person name="Wollam A."/>
            <person name="Yoakum M."/>
            <person name="Bell M."/>
            <person name="Dedhia N."/>
            <person name="Parnell L."/>
            <person name="Shah R."/>
            <person name="Rodriguez M."/>
            <person name="Hoon See L."/>
            <person name="Vil D."/>
            <person name="Baker J."/>
            <person name="Kirchoff K."/>
            <person name="Toth K."/>
            <person name="King L."/>
            <person name="Bahret A."/>
            <person name="Miller B."/>
            <person name="Marra M.A."/>
            <person name="Martienssen R."/>
            <person name="McCombie W.R."/>
            <person name="Wilson R.K."/>
            <person name="Murphy G."/>
            <person name="Bancroft I."/>
            <person name="Volckaert G."/>
            <person name="Wambutt R."/>
            <person name="Duesterhoeft A."/>
            <person name="Stiekema W."/>
            <person name="Pohl T."/>
            <person name="Entian K.-D."/>
            <person name="Terryn N."/>
            <person name="Hartley N."/>
            <person name="Bent E."/>
            <person name="Johnson S."/>
            <person name="Langham S.-A."/>
            <person name="McCullagh B."/>
            <person name="Robben J."/>
            <person name="Grymonprez B."/>
            <person name="Zimmermann W."/>
            <person name="Ramsperger U."/>
            <person name="Wedler H."/>
            <person name="Balke K."/>
            <person name="Wedler E."/>
            <person name="Peters S."/>
            <person name="van Staveren M."/>
            <person name="Dirkse W."/>
            <person name="Mooijman P."/>
            <person name="Klein Lankhorst R."/>
            <person name="Weitzenegger T."/>
            <person name="Bothe G."/>
            <person name="Rose M."/>
            <person name="Hauf J."/>
            <person name="Berneiser S."/>
            <person name="Hempel S."/>
            <person name="Feldpausch M."/>
            <person name="Lamberth S."/>
            <person name="Villarroel R."/>
            <person name="Gielen J."/>
            <person name="Ardiles W."/>
            <person name="Bents O."/>
            <person name="Lemcke K."/>
            <person name="Kolesov G."/>
            <person name="Mayer K.F.X."/>
            <person name="Rudd S."/>
            <person name="Schoof H."/>
            <person name="Schueller C."/>
            <person name="Zaccaria P."/>
            <person name="Mewes H.-W."/>
            <person name="Bevan M."/>
            <person name="Fransz P.F."/>
        </authorList>
    </citation>
    <scope>NUCLEOTIDE SEQUENCE [LARGE SCALE GENOMIC DNA]</scope>
    <source>
        <strain>cv. Columbia</strain>
    </source>
</reference>
<reference key="2">
    <citation type="journal article" date="2017" name="Plant J.">
        <title>Araport11: a complete reannotation of the Arabidopsis thaliana reference genome.</title>
        <authorList>
            <person name="Cheng C.Y."/>
            <person name="Krishnakumar V."/>
            <person name="Chan A.P."/>
            <person name="Thibaud-Nissen F."/>
            <person name="Schobel S."/>
            <person name="Town C.D."/>
        </authorList>
    </citation>
    <scope>GENOME REANNOTATION</scope>
    <source>
        <strain>cv. Columbia</strain>
    </source>
</reference>
<reference key="3">
    <citation type="journal article" date="2003" name="Science">
        <title>Empirical analysis of transcriptional activity in the Arabidopsis genome.</title>
        <authorList>
            <person name="Yamada K."/>
            <person name="Lim J."/>
            <person name="Dale J.M."/>
            <person name="Chen H."/>
            <person name="Shinn P."/>
            <person name="Palm C.J."/>
            <person name="Southwick A.M."/>
            <person name="Wu H.C."/>
            <person name="Kim C.J."/>
            <person name="Nguyen M."/>
            <person name="Pham P.K."/>
            <person name="Cheuk R.F."/>
            <person name="Karlin-Newmann G."/>
            <person name="Liu S.X."/>
            <person name="Lam B."/>
            <person name="Sakano H."/>
            <person name="Wu T."/>
            <person name="Yu G."/>
            <person name="Miranda M."/>
            <person name="Quach H.L."/>
            <person name="Tripp M."/>
            <person name="Chang C.H."/>
            <person name="Lee J.M."/>
            <person name="Toriumi M.J."/>
            <person name="Chan M.M."/>
            <person name="Tang C.C."/>
            <person name="Onodera C.S."/>
            <person name="Deng J.M."/>
            <person name="Akiyama K."/>
            <person name="Ansari Y."/>
            <person name="Arakawa T."/>
            <person name="Banh J."/>
            <person name="Banno F."/>
            <person name="Bowser L."/>
            <person name="Brooks S.Y."/>
            <person name="Carninci P."/>
            <person name="Chao Q."/>
            <person name="Choy N."/>
            <person name="Enju A."/>
            <person name="Goldsmith A.D."/>
            <person name="Gurjal M."/>
            <person name="Hansen N.F."/>
            <person name="Hayashizaki Y."/>
            <person name="Johnson-Hopson C."/>
            <person name="Hsuan V.W."/>
            <person name="Iida K."/>
            <person name="Karnes M."/>
            <person name="Khan S."/>
            <person name="Koesema E."/>
            <person name="Ishida J."/>
            <person name="Jiang P.X."/>
            <person name="Jones T."/>
            <person name="Kawai J."/>
            <person name="Kamiya A."/>
            <person name="Meyers C."/>
            <person name="Nakajima M."/>
            <person name="Narusaka M."/>
            <person name="Seki M."/>
            <person name="Sakurai T."/>
            <person name="Satou M."/>
            <person name="Tamse R."/>
            <person name="Vaysberg M."/>
            <person name="Wallender E.K."/>
            <person name="Wong C."/>
            <person name="Yamamura Y."/>
            <person name="Yuan S."/>
            <person name="Shinozaki K."/>
            <person name="Davis R.W."/>
            <person name="Theologis A."/>
            <person name="Ecker J.R."/>
        </authorList>
    </citation>
    <scope>NUCLEOTIDE SEQUENCE [LARGE SCALE MRNA]</scope>
    <source>
        <strain>cv. Columbia</strain>
    </source>
</reference>
<reference key="4">
    <citation type="submission" date="2002-03" db="EMBL/GenBank/DDBJ databases">
        <title>Full-length cDNA from Arabidopsis thaliana.</title>
        <authorList>
            <person name="Brover V.V."/>
            <person name="Troukhan M.E."/>
            <person name="Alexandrov N.A."/>
            <person name="Lu Y.-P."/>
            <person name="Flavell R.B."/>
            <person name="Feldmann K.A."/>
        </authorList>
    </citation>
    <scope>NUCLEOTIDE SEQUENCE [LARGE SCALE MRNA]</scope>
</reference>
<reference key="5">
    <citation type="journal article" date="2007" name="Plant Cell Physiol.">
        <title>GASA4, one of the 14-member Arabidopsis GASA family of small polypeptides, regulates flowering and seed development.</title>
        <authorList>
            <person name="Roxrud I."/>
            <person name="Lid S.E."/>
            <person name="Fletcher J.C."/>
            <person name="Schmidt E.D."/>
            <person name="Opsahl-Sorteberg H.G."/>
        </authorList>
    </citation>
    <scope>TISSUE SPECIFICITY</scope>
</reference>
<feature type="signal peptide" evidence="2">
    <location>
        <begin position="1"/>
        <end position="21"/>
    </location>
</feature>
<feature type="chain" id="PRO_0000413712" description="Gibberellin-regulated protein 14">
    <location>
        <begin position="22"/>
        <end position="275"/>
    </location>
</feature>
<feature type="region of interest" description="Disordered" evidence="3">
    <location>
        <begin position="34"/>
        <end position="207"/>
    </location>
</feature>
<feature type="compositionally biased region" description="Pro residues" evidence="3">
    <location>
        <begin position="36"/>
        <end position="207"/>
    </location>
</feature>
<feature type="sequence conflict" description="In Ref. 4; AAM64739." evidence="5" ref="4">
    <original>N</original>
    <variation>K</variation>
    <location>
        <position position="28"/>
    </location>
</feature>
<feature type="sequence conflict" description="In Ref. 4; AAM64739." evidence="5" ref="4">
    <original>IP</original>
    <variation>TS</variation>
    <location>
        <begin position="83"/>
        <end position="84"/>
    </location>
</feature>
<sequence>MALSLLSVFIFFHVFTNVVFAASNEESNALVSLPTPTLPSPSPATKPPSPALKPPTPSYKPPTLPTTPIKPPTTKPPVKPPTIPVTPVKPPVSTPPIKLPPVQPPTYKPPTPTVKPPSVQPPTYKPPTPTVKPPTTSPVKPPTTPPVQSPPVQPPTYKPPTSPVKPPTTTPPVKPPTTTPPVQPPTYNPPTTPVKPPTAPPVKPPTPPPVRTRIDCVPLCGTRCGQHSRKNVCMRACVTCCYRCKCVPPGTYGNKEKCGSCYANMKTRGGKSKCP</sequence>
<protein>
    <recommendedName>
        <fullName>Gibberellin-regulated protein 14</fullName>
    </recommendedName>
    <alternativeName>
        <fullName>GAST1 protein homolog 14</fullName>
    </alternativeName>
</protein>
<name>GASAE_ARATH</name>